<organism>
    <name type="scientific">Chloroflexus aurantiacus (strain ATCC 29366 / DSM 635 / J-10-fl)</name>
    <dbReference type="NCBI Taxonomy" id="324602"/>
    <lineage>
        <taxon>Bacteria</taxon>
        <taxon>Bacillati</taxon>
        <taxon>Chloroflexota</taxon>
        <taxon>Chloroflexia</taxon>
        <taxon>Chloroflexales</taxon>
        <taxon>Chloroflexineae</taxon>
        <taxon>Chloroflexaceae</taxon>
        <taxon>Chloroflexus</taxon>
    </lineage>
</organism>
<gene>
    <name evidence="1" type="primary">moaC</name>
    <name type="ordered locus">Caur_0765</name>
</gene>
<accession>A9WG82</accession>
<reference key="1">
    <citation type="journal article" date="2011" name="BMC Genomics">
        <title>Complete genome sequence of the filamentous anoxygenic phototrophic bacterium Chloroflexus aurantiacus.</title>
        <authorList>
            <person name="Tang K.H."/>
            <person name="Barry K."/>
            <person name="Chertkov O."/>
            <person name="Dalin E."/>
            <person name="Han C.S."/>
            <person name="Hauser L.J."/>
            <person name="Honchak B.M."/>
            <person name="Karbach L.E."/>
            <person name="Land M.L."/>
            <person name="Lapidus A."/>
            <person name="Larimer F.W."/>
            <person name="Mikhailova N."/>
            <person name="Pitluck S."/>
            <person name="Pierson B.K."/>
            <person name="Blankenship R.E."/>
        </authorList>
    </citation>
    <scope>NUCLEOTIDE SEQUENCE [LARGE SCALE GENOMIC DNA]</scope>
    <source>
        <strain>ATCC 29366 / DSM 635 / J-10-fl</strain>
    </source>
</reference>
<protein>
    <recommendedName>
        <fullName evidence="1">Cyclic pyranopterin monophosphate synthase</fullName>
        <ecNumber evidence="1">4.6.1.17</ecNumber>
    </recommendedName>
    <alternativeName>
        <fullName evidence="1">Molybdenum cofactor biosynthesis protein C</fullName>
    </alternativeName>
</protein>
<proteinExistence type="inferred from homology"/>
<name>MOAC_CHLAA</name>
<comment type="function">
    <text evidence="1">Catalyzes the conversion of (8S)-3',8-cyclo-7,8-dihydroguanosine 5'-triphosphate to cyclic pyranopterin monophosphate (cPMP).</text>
</comment>
<comment type="catalytic activity">
    <reaction evidence="1">
        <text>(8S)-3',8-cyclo-7,8-dihydroguanosine 5'-triphosphate = cyclic pyranopterin phosphate + diphosphate</text>
        <dbReference type="Rhea" id="RHEA:49580"/>
        <dbReference type="ChEBI" id="CHEBI:33019"/>
        <dbReference type="ChEBI" id="CHEBI:59648"/>
        <dbReference type="ChEBI" id="CHEBI:131766"/>
        <dbReference type="EC" id="4.6.1.17"/>
    </reaction>
</comment>
<comment type="pathway">
    <text evidence="1">Cofactor biosynthesis; molybdopterin biosynthesis.</text>
</comment>
<comment type="subunit">
    <text evidence="1">Homohexamer; trimer of dimers.</text>
</comment>
<comment type="similarity">
    <text evidence="1">Belongs to the MoaC family.</text>
</comment>
<sequence length="163" mass="17507">MSEAHNELTHLDAAGHARMVDVGDKAVTAREAVARGRVVMQPETLALIMDGKLPKGDVLAVARVAGIMAAKRTAELIPLCHLLNLSHASVQFTPDPASNALEIEATVRCQGQTGVEMEALTAVSIAALTIYDMCKAVDKTMQIDQIRLIAKRGGRSGDWQRPR</sequence>
<feature type="chain" id="PRO_1000213982" description="Cyclic pyranopterin monophosphate synthase">
    <location>
        <begin position="1"/>
        <end position="163"/>
    </location>
</feature>
<feature type="active site" evidence="1">
    <location>
        <position position="132"/>
    </location>
</feature>
<feature type="binding site" evidence="1">
    <location>
        <begin position="79"/>
        <end position="81"/>
    </location>
    <ligand>
        <name>substrate</name>
    </ligand>
</feature>
<feature type="binding site" evidence="1">
    <location>
        <begin position="117"/>
        <end position="118"/>
    </location>
    <ligand>
        <name>substrate</name>
    </ligand>
</feature>
<keyword id="KW-0456">Lyase</keyword>
<keyword id="KW-0501">Molybdenum cofactor biosynthesis</keyword>
<keyword id="KW-1185">Reference proteome</keyword>
<evidence type="ECO:0000255" key="1">
    <source>
        <dbReference type="HAMAP-Rule" id="MF_01224"/>
    </source>
</evidence>
<dbReference type="EC" id="4.6.1.17" evidence="1"/>
<dbReference type="EMBL" id="CP000909">
    <property type="protein sequence ID" value="ABY34003.1"/>
    <property type="molecule type" value="Genomic_DNA"/>
</dbReference>
<dbReference type="RefSeq" id="WP_012256659.1">
    <property type="nucleotide sequence ID" value="NC_010175.1"/>
</dbReference>
<dbReference type="RefSeq" id="YP_001634392.1">
    <property type="nucleotide sequence ID" value="NC_010175.1"/>
</dbReference>
<dbReference type="SMR" id="A9WG82"/>
<dbReference type="FunCoup" id="A9WG82">
    <property type="interactions" value="358"/>
</dbReference>
<dbReference type="STRING" id="324602.Caur_0765"/>
<dbReference type="EnsemblBacteria" id="ABY34003">
    <property type="protein sequence ID" value="ABY34003"/>
    <property type="gene ID" value="Caur_0765"/>
</dbReference>
<dbReference type="KEGG" id="cau:Caur_0765"/>
<dbReference type="PATRIC" id="fig|324602.8.peg.870"/>
<dbReference type="eggNOG" id="COG0315">
    <property type="taxonomic scope" value="Bacteria"/>
</dbReference>
<dbReference type="HOGENOM" id="CLU_074693_1_1_0"/>
<dbReference type="InParanoid" id="A9WG82"/>
<dbReference type="UniPathway" id="UPA00344"/>
<dbReference type="Proteomes" id="UP000002008">
    <property type="component" value="Chromosome"/>
</dbReference>
<dbReference type="GO" id="GO:0061799">
    <property type="term" value="F:cyclic pyranopterin monophosphate synthase activity"/>
    <property type="evidence" value="ECO:0007669"/>
    <property type="project" value="UniProtKB-UniRule"/>
</dbReference>
<dbReference type="GO" id="GO:0006777">
    <property type="term" value="P:Mo-molybdopterin cofactor biosynthetic process"/>
    <property type="evidence" value="ECO:0007669"/>
    <property type="project" value="UniProtKB-UniRule"/>
</dbReference>
<dbReference type="CDD" id="cd01420">
    <property type="entry name" value="MoaC_PE"/>
    <property type="match status" value="1"/>
</dbReference>
<dbReference type="Gene3D" id="3.30.70.640">
    <property type="entry name" value="Molybdopterin cofactor biosynthesis C (MoaC) domain"/>
    <property type="match status" value="1"/>
</dbReference>
<dbReference type="HAMAP" id="MF_01224_B">
    <property type="entry name" value="MoaC_B"/>
    <property type="match status" value="1"/>
</dbReference>
<dbReference type="InterPro" id="IPR023045">
    <property type="entry name" value="MoaC"/>
</dbReference>
<dbReference type="InterPro" id="IPR047594">
    <property type="entry name" value="MoaC_bact/euk"/>
</dbReference>
<dbReference type="InterPro" id="IPR036522">
    <property type="entry name" value="MoaC_sf"/>
</dbReference>
<dbReference type="InterPro" id="IPR050105">
    <property type="entry name" value="MoCo_biosynth_MoaA/MoaC"/>
</dbReference>
<dbReference type="InterPro" id="IPR002820">
    <property type="entry name" value="Mopterin_CF_biosynth-C_dom"/>
</dbReference>
<dbReference type="NCBIfam" id="TIGR00581">
    <property type="entry name" value="moaC"/>
    <property type="match status" value="1"/>
</dbReference>
<dbReference type="NCBIfam" id="NF006870">
    <property type="entry name" value="PRK09364.1"/>
    <property type="match status" value="1"/>
</dbReference>
<dbReference type="PANTHER" id="PTHR22960:SF29">
    <property type="entry name" value="CYCLIC PYRANOPTERIN MONOPHOSPHATE SYNTHASE"/>
    <property type="match status" value="1"/>
</dbReference>
<dbReference type="PANTHER" id="PTHR22960">
    <property type="entry name" value="MOLYBDOPTERIN COFACTOR SYNTHESIS PROTEIN A"/>
    <property type="match status" value="1"/>
</dbReference>
<dbReference type="Pfam" id="PF01967">
    <property type="entry name" value="MoaC"/>
    <property type="match status" value="1"/>
</dbReference>
<dbReference type="SUPFAM" id="SSF55040">
    <property type="entry name" value="Molybdenum cofactor biosynthesis protein C, MoaC"/>
    <property type="match status" value="1"/>
</dbReference>